<comment type="function">
    <text evidence="1">Involved in the biosynthesis of the central metabolite phospho-alpha-D-ribosyl-1-pyrophosphate (PRPP) via the transfer of pyrophosphoryl group from ATP to 1-hydroxyl of ribose-5-phosphate (Rib-5-P).</text>
</comment>
<comment type="catalytic activity">
    <reaction evidence="1">
        <text>D-ribose 5-phosphate + ATP = 5-phospho-alpha-D-ribose 1-diphosphate + AMP + H(+)</text>
        <dbReference type="Rhea" id="RHEA:15609"/>
        <dbReference type="ChEBI" id="CHEBI:15378"/>
        <dbReference type="ChEBI" id="CHEBI:30616"/>
        <dbReference type="ChEBI" id="CHEBI:58017"/>
        <dbReference type="ChEBI" id="CHEBI:78346"/>
        <dbReference type="ChEBI" id="CHEBI:456215"/>
        <dbReference type="EC" id="2.7.6.1"/>
    </reaction>
</comment>
<comment type="cofactor">
    <cofactor evidence="1">
        <name>Mg(2+)</name>
        <dbReference type="ChEBI" id="CHEBI:18420"/>
    </cofactor>
    <text evidence="1">Binds 2 Mg(2+) ions per subunit.</text>
</comment>
<comment type="pathway">
    <text evidence="1">Metabolic intermediate biosynthesis; 5-phospho-alpha-D-ribose 1-diphosphate biosynthesis; 5-phospho-alpha-D-ribose 1-diphosphate from D-ribose 5-phosphate (route I): step 1/1.</text>
</comment>
<comment type="subunit">
    <text evidence="1">Homohexamer.</text>
</comment>
<comment type="subcellular location">
    <subcellularLocation>
        <location evidence="1">Cytoplasm</location>
    </subcellularLocation>
</comment>
<comment type="similarity">
    <text evidence="1">Belongs to the ribose-phosphate pyrophosphokinase family. Class I subfamily.</text>
</comment>
<accession>Q8Y2E1</accession>
<organism>
    <name type="scientific">Ralstonia nicotianae (strain ATCC BAA-1114 / GMI1000)</name>
    <name type="common">Ralstonia solanacearum</name>
    <dbReference type="NCBI Taxonomy" id="267608"/>
    <lineage>
        <taxon>Bacteria</taxon>
        <taxon>Pseudomonadati</taxon>
        <taxon>Pseudomonadota</taxon>
        <taxon>Betaproteobacteria</taxon>
        <taxon>Burkholderiales</taxon>
        <taxon>Burkholderiaceae</taxon>
        <taxon>Ralstonia</taxon>
        <taxon>Ralstonia solanacearum species complex</taxon>
    </lineage>
</organism>
<keyword id="KW-0067">ATP-binding</keyword>
<keyword id="KW-0963">Cytoplasm</keyword>
<keyword id="KW-0418">Kinase</keyword>
<keyword id="KW-0460">Magnesium</keyword>
<keyword id="KW-0479">Metal-binding</keyword>
<keyword id="KW-0545">Nucleotide biosynthesis</keyword>
<keyword id="KW-0547">Nucleotide-binding</keyword>
<keyword id="KW-1185">Reference proteome</keyword>
<keyword id="KW-0808">Transferase</keyword>
<proteinExistence type="inferred from homology"/>
<sequence length="316" mass="34314">MSSEGLMVFTGNANPKLAEAVVKHLNIPLGKALVGRFSDGEVQVEIQENVRGKHVFILQSTCAPTNDNLMELMVMVDALKRASARRITAAIPYFGYARQDRRPRSARVAISAKVVANMLEVAGVERVLTMDLHADQIQGFFDIPVDNIYASPILLEDLRKKNYDNLLVVSPDVGGVVRARALAKQLGVDLAIIDKRRPKANVAEVMNIIGEVEGRNCVIMDDMIDTGGTLCKAAQVLKERGAKQVFSYCTHPVLSGGAAARIADSALDEVVVTDTIPLRDDAAQCGKIRQLSTAPLLAETFTRIVRGDSIMSLFAE</sequence>
<dbReference type="EC" id="2.7.6.1" evidence="1"/>
<dbReference type="EMBL" id="AL646052">
    <property type="protein sequence ID" value="CAD13923.1"/>
    <property type="molecule type" value="Genomic_DNA"/>
</dbReference>
<dbReference type="RefSeq" id="WP_011000357.1">
    <property type="nucleotide sequence ID" value="NC_003295.1"/>
</dbReference>
<dbReference type="SMR" id="Q8Y2E1"/>
<dbReference type="STRING" id="267608.RSc0395"/>
<dbReference type="EnsemblBacteria" id="CAD13923">
    <property type="protein sequence ID" value="CAD13923"/>
    <property type="gene ID" value="RSc0395"/>
</dbReference>
<dbReference type="KEGG" id="rso:RSc0395"/>
<dbReference type="eggNOG" id="COG0462">
    <property type="taxonomic scope" value="Bacteria"/>
</dbReference>
<dbReference type="HOGENOM" id="CLU_033546_2_0_4"/>
<dbReference type="UniPathway" id="UPA00087">
    <property type="reaction ID" value="UER00172"/>
</dbReference>
<dbReference type="Proteomes" id="UP000001436">
    <property type="component" value="Chromosome"/>
</dbReference>
<dbReference type="GO" id="GO:0005737">
    <property type="term" value="C:cytoplasm"/>
    <property type="evidence" value="ECO:0007669"/>
    <property type="project" value="UniProtKB-SubCell"/>
</dbReference>
<dbReference type="GO" id="GO:0002189">
    <property type="term" value="C:ribose phosphate diphosphokinase complex"/>
    <property type="evidence" value="ECO:0007669"/>
    <property type="project" value="TreeGrafter"/>
</dbReference>
<dbReference type="GO" id="GO:0005524">
    <property type="term" value="F:ATP binding"/>
    <property type="evidence" value="ECO:0007669"/>
    <property type="project" value="UniProtKB-KW"/>
</dbReference>
<dbReference type="GO" id="GO:0016301">
    <property type="term" value="F:kinase activity"/>
    <property type="evidence" value="ECO:0007669"/>
    <property type="project" value="UniProtKB-KW"/>
</dbReference>
<dbReference type="GO" id="GO:0000287">
    <property type="term" value="F:magnesium ion binding"/>
    <property type="evidence" value="ECO:0007669"/>
    <property type="project" value="UniProtKB-UniRule"/>
</dbReference>
<dbReference type="GO" id="GO:0004749">
    <property type="term" value="F:ribose phosphate diphosphokinase activity"/>
    <property type="evidence" value="ECO:0007669"/>
    <property type="project" value="UniProtKB-UniRule"/>
</dbReference>
<dbReference type="GO" id="GO:0006015">
    <property type="term" value="P:5-phosphoribose 1-diphosphate biosynthetic process"/>
    <property type="evidence" value="ECO:0007669"/>
    <property type="project" value="UniProtKB-UniRule"/>
</dbReference>
<dbReference type="GO" id="GO:0006164">
    <property type="term" value="P:purine nucleotide biosynthetic process"/>
    <property type="evidence" value="ECO:0007669"/>
    <property type="project" value="TreeGrafter"/>
</dbReference>
<dbReference type="GO" id="GO:0009156">
    <property type="term" value="P:ribonucleoside monophosphate biosynthetic process"/>
    <property type="evidence" value="ECO:0007669"/>
    <property type="project" value="InterPro"/>
</dbReference>
<dbReference type="CDD" id="cd06223">
    <property type="entry name" value="PRTases_typeI"/>
    <property type="match status" value="1"/>
</dbReference>
<dbReference type="FunFam" id="3.40.50.2020:FF:000001">
    <property type="entry name" value="Ribose-phosphate pyrophosphokinase"/>
    <property type="match status" value="1"/>
</dbReference>
<dbReference type="Gene3D" id="3.40.50.2020">
    <property type="match status" value="2"/>
</dbReference>
<dbReference type="HAMAP" id="MF_00583_B">
    <property type="entry name" value="RibP_PPkinase_B"/>
    <property type="match status" value="1"/>
</dbReference>
<dbReference type="InterPro" id="IPR000842">
    <property type="entry name" value="PRib_PP_synth_CS"/>
</dbReference>
<dbReference type="InterPro" id="IPR029099">
    <property type="entry name" value="Pribosyltran_N"/>
</dbReference>
<dbReference type="InterPro" id="IPR000836">
    <property type="entry name" value="PRibTrfase_dom"/>
</dbReference>
<dbReference type="InterPro" id="IPR029057">
    <property type="entry name" value="PRTase-like"/>
</dbReference>
<dbReference type="InterPro" id="IPR005946">
    <property type="entry name" value="Rib-P_diPkinase"/>
</dbReference>
<dbReference type="InterPro" id="IPR037515">
    <property type="entry name" value="Rib-P_diPkinase_bac"/>
</dbReference>
<dbReference type="NCBIfam" id="NF002320">
    <property type="entry name" value="PRK01259.1"/>
    <property type="match status" value="1"/>
</dbReference>
<dbReference type="NCBIfam" id="TIGR01251">
    <property type="entry name" value="ribP_PPkin"/>
    <property type="match status" value="1"/>
</dbReference>
<dbReference type="PANTHER" id="PTHR10210">
    <property type="entry name" value="RIBOSE-PHOSPHATE DIPHOSPHOKINASE FAMILY MEMBER"/>
    <property type="match status" value="1"/>
</dbReference>
<dbReference type="PANTHER" id="PTHR10210:SF41">
    <property type="entry name" value="RIBOSE-PHOSPHATE PYROPHOSPHOKINASE 1, CHLOROPLASTIC"/>
    <property type="match status" value="1"/>
</dbReference>
<dbReference type="Pfam" id="PF14572">
    <property type="entry name" value="Pribosyl_synth"/>
    <property type="match status" value="1"/>
</dbReference>
<dbReference type="Pfam" id="PF13793">
    <property type="entry name" value="Pribosyltran_N"/>
    <property type="match status" value="1"/>
</dbReference>
<dbReference type="SMART" id="SM01400">
    <property type="entry name" value="Pribosyltran_N"/>
    <property type="match status" value="1"/>
</dbReference>
<dbReference type="SUPFAM" id="SSF53271">
    <property type="entry name" value="PRTase-like"/>
    <property type="match status" value="1"/>
</dbReference>
<dbReference type="PROSITE" id="PS00114">
    <property type="entry name" value="PRPP_SYNTHASE"/>
    <property type="match status" value="1"/>
</dbReference>
<gene>
    <name evidence="1" type="primary">prs</name>
    <name type="synonym">prsA</name>
    <name type="ordered locus">RSc0395</name>
    <name type="ORF">RS03363</name>
</gene>
<evidence type="ECO:0000255" key="1">
    <source>
        <dbReference type="HAMAP-Rule" id="MF_00583"/>
    </source>
</evidence>
<name>KPRS_RALN1</name>
<protein>
    <recommendedName>
        <fullName evidence="1">Ribose-phosphate pyrophosphokinase</fullName>
        <shortName evidence="1">RPPK</shortName>
        <ecNumber evidence="1">2.7.6.1</ecNumber>
    </recommendedName>
    <alternativeName>
        <fullName evidence="1">5-phospho-D-ribosyl alpha-1-diphosphate synthase</fullName>
    </alternativeName>
    <alternativeName>
        <fullName evidence="1">Phosphoribosyl diphosphate synthase</fullName>
    </alternativeName>
    <alternativeName>
        <fullName evidence="1">Phosphoribosyl pyrophosphate synthase</fullName>
        <shortName evidence="1">P-Rib-PP synthase</shortName>
        <shortName evidence="1">PRPP synthase</shortName>
        <shortName evidence="1">PRPPase</shortName>
    </alternativeName>
</protein>
<reference key="1">
    <citation type="journal article" date="2002" name="Nature">
        <title>Genome sequence of the plant pathogen Ralstonia solanacearum.</title>
        <authorList>
            <person name="Salanoubat M."/>
            <person name="Genin S."/>
            <person name="Artiguenave F."/>
            <person name="Gouzy J."/>
            <person name="Mangenot S."/>
            <person name="Arlat M."/>
            <person name="Billault A."/>
            <person name="Brottier P."/>
            <person name="Camus J.-C."/>
            <person name="Cattolico L."/>
            <person name="Chandler M."/>
            <person name="Choisne N."/>
            <person name="Claudel-Renard C."/>
            <person name="Cunnac S."/>
            <person name="Demange N."/>
            <person name="Gaspin C."/>
            <person name="Lavie M."/>
            <person name="Moisan A."/>
            <person name="Robert C."/>
            <person name="Saurin W."/>
            <person name="Schiex T."/>
            <person name="Siguier P."/>
            <person name="Thebault P."/>
            <person name="Whalen M."/>
            <person name="Wincker P."/>
            <person name="Levy M."/>
            <person name="Weissenbach J."/>
            <person name="Boucher C.A."/>
        </authorList>
    </citation>
    <scope>NUCLEOTIDE SEQUENCE [LARGE SCALE GENOMIC DNA]</scope>
    <source>
        <strain>ATCC BAA-1114 / GMI1000</strain>
    </source>
</reference>
<feature type="chain" id="PRO_0000141179" description="Ribose-phosphate pyrophosphokinase">
    <location>
        <begin position="1"/>
        <end position="316"/>
    </location>
</feature>
<feature type="active site" evidence="1">
    <location>
        <position position="195"/>
    </location>
</feature>
<feature type="binding site" evidence="1">
    <location>
        <begin position="39"/>
        <end position="41"/>
    </location>
    <ligand>
        <name>ATP</name>
        <dbReference type="ChEBI" id="CHEBI:30616"/>
    </ligand>
</feature>
<feature type="binding site" evidence="1">
    <location>
        <begin position="98"/>
        <end position="99"/>
    </location>
    <ligand>
        <name>ATP</name>
        <dbReference type="ChEBI" id="CHEBI:30616"/>
    </ligand>
</feature>
<feature type="binding site" evidence="1">
    <location>
        <position position="133"/>
    </location>
    <ligand>
        <name>Mg(2+)</name>
        <dbReference type="ChEBI" id="CHEBI:18420"/>
        <label>1</label>
    </ligand>
</feature>
<feature type="binding site" evidence="1">
    <location>
        <position position="172"/>
    </location>
    <ligand>
        <name>Mg(2+)</name>
        <dbReference type="ChEBI" id="CHEBI:18420"/>
        <label>2</label>
    </ligand>
</feature>
<feature type="binding site" evidence="1">
    <location>
        <position position="197"/>
    </location>
    <ligand>
        <name>D-ribose 5-phosphate</name>
        <dbReference type="ChEBI" id="CHEBI:78346"/>
    </ligand>
</feature>
<feature type="binding site" evidence="1">
    <location>
        <position position="221"/>
    </location>
    <ligand>
        <name>D-ribose 5-phosphate</name>
        <dbReference type="ChEBI" id="CHEBI:78346"/>
    </ligand>
</feature>
<feature type="binding site" evidence="1">
    <location>
        <begin position="225"/>
        <end position="229"/>
    </location>
    <ligand>
        <name>D-ribose 5-phosphate</name>
        <dbReference type="ChEBI" id="CHEBI:78346"/>
    </ligand>
</feature>